<evidence type="ECO:0000250" key="1"/>
<evidence type="ECO:0000256" key="2">
    <source>
        <dbReference type="SAM" id="MobiDB-lite"/>
    </source>
</evidence>
<evidence type="ECO:0000305" key="3"/>
<feature type="chain" id="PRO_0000395686" description="Probable catabolite repression protein creC">
    <location>
        <begin position="1"/>
        <end position="573"/>
    </location>
</feature>
<feature type="repeat" description="WD 1">
    <location>
        <begin position="225"/>
        <end position="265"/>
    </location>
</feature>
<feature type="repeat" description="WD 2">
    <location>
        <begin position="305"/>
        <end position="346"/>
    </location>
</feature>
<feature type="repeat" description="WD 3">
    <location>
        <begin position="347"/>
        <end position="386"/>
    </location>
</feature>
<feature type="repeat" description="WD 4">
    <location>
        <begin position="389"/>
        <end position="433"/>
    </location>
</feature>
<feature type="repeat" description="WD 5">
    <location>
        <begin position="505"/>
        <end position="542"/>
    </location>
</feature>
<feature type="region of interest" description="Disordered" evidence="2">
    <location>
        <begin position="448"/>
        <end position="481"/>
    </location>
</feature>
<feature type="region of interest" description="Disordered" evidence="2">
    <location>
        <begin position="537"/>
        <end position="573"/>
    </location>
</feature>
<feature type="compositionally biased region" description="Polar residues" evidence="2">
    <location>
        <begin position="461"/>
        <end position="479"/>
    </location>
</feature>
<feature type="compositionally biased region" description="Low complexity" evidence="2">
    <location>
        <begin position="547"/>
        <end position="564"/>
    </location>
</feature>
<protein>
    <recommendedName>
        <fullName>Probable catabolite repression protein creC</fullName>
    </recommendedName>
</protein>
<proteinExistence type="inferred from homology"/>
<accession>A1CTE6</accession>
<name>CREC_ASPCL</name>
<reference key="1">
    <citation type="journal article" date="2008" name="PLoS Genet.">
        <title>Genomic islands in the pathogenic filamentous fungus Aspergillus fumigatus.</title>
        <authorList>
            <person name="Fedorova N.D."/>
            <person name="Khaldi N."/>
            <person name="Joardar V.S."/>
            <person name="Maiti R."/>
            <person name="Amedeo P."/>
            <person name="Anderson M.J."/>
            <person name="Crabtree J."/>
            <person name="Silva J.C."/>
            <person name="Badger J.H."/>
            <person name="Albarraq A."/>
            <person name="Angiuoli S."/>
            <person name="Bussey H."/>
            <person name="Bowyer P."/>
            <person name="Cotty P.J."/>
            <person name="Dyer P.S."/>
            <person name="Egan A."/>
            <person name="Galens K."/>
            <person name="Fraser-Liggett C.M."/>
            <person name="Haas B.J."/>
            <person name="Inman J.M."/>
            <person name="Kent R."/>
            <person name="Lemieux S."/>
            <person name="Malavazi I."/>
            <person name="Orvis J."/>
            <person name="Roemer T."/>
            <person name="Ronning C.M."/>
            <person name="Sundaram J.P."/>
            <person name="Sutton G."/>
            <person name="Turner G."/>
            <person name="Venter J.C."/>
            <person name="White O.R."/>
            <person name="Whitty B.R."/>
            <person name="Youngman P."/>
            <person name="Wolfe K.H."/>
            <person name="Goldman G.H."/>
            <person name="Wortman J.R."/>
            <person name="Jiang B."/>
            <person name="Denning D.W."/>
            <person name="Nierman W.C."/>
        </authorList>
    </citation>
    <scope>NUCLEOTIDE SEQUENCE [LARGE SCALE GENOMIC DNA]</scope>
    <source>
        <strain>ATCC 1007 / CBS 513.65 / DSM 816 / NCTC 3887 / NRRL 1 / QM 1276 / 107</strain>
    </source>
</reference>
<keyword id="KW-1185">Reference proteome</keyword>
<keyword id="KW-0677">Repeat</keyword>
<keyword id="KW-0804">Transcription</keyword>
<keyword id="KW-0805">Transcription regulation</keyword>
<keyword id="KW-0833">Ubl conjugation pathway</keyword>
<keyword id="KW-0853">WD repeat</keyword>
<comment type="function">
    <text evidence="1">Component of the regulatory network controlling carbon source utilization through ubiquitination and deubiquitination involving creA, creB, creC, creD and acrB. Required to prevent the proteolysis of the CreB deubiquitinating enzyme in the absence of carbon catabolite repression. CreB deubiquitinating enzyme stabilized in a complex with the CreC leads to the expression of genes such as those in the proline and quinate pathways (By similarity).</text>
</comment>
<comment type="subunit">
    <text evidence="1">Interacts with creB.</text>
</comment>
<comment type="similarity">
    <text evidence="3">Belongs to the WD repeat creC family.</text>
</comment>
<comment type="sequence caution" evidence="3">
    <conflict type="erroneous gene model prediction">
        <sequence resource="EMBL-CDS" id="EAW06583"/>
    </conflict>
</comment>
<organism>
    <name type="scientific">Aspergillus clavatus (strain ATCC 1007 / CBS 513.65 / DSM 816 / NCTC 3887 / NRRL 1 / QM 1276 / 107)</name>
    <dbReference type="NCBI Taxonomy" id="344612"/>
    <lineage>
        <taxon>Eukaryota</taxon>
        <taxon>Fungi</taxon>
        <taxon>Dikarya</taxon>
        <taxon>Ascomycota</taxon>
        <taxon>Pezizomycotina</taxon>
        <taxon>Eurotiomycetes</taxon>
        <taxon>Eurotiomycetidae</taxon>
        <taxon>Eurotiales</taxon>
        <taxon>Aspergillaceae</taxon>
        <taxon>Aspergillus</taxon>
        <taxon>Aspergillus subgen. Fumigati</taxon>
    </lineage>
</organism>
<dbReference type="EMBL" id="DS027060">
    <property type="protein sequence ID" value="EAW06583.1"/>
    <property type="status" value="ALT_SEQ"/>
    <property type="molecule type" value="Genomic_DNA"/>
</dbReference>
<dbReference type="RefSeq" id="XP_001268009.1">
    <property type="nucleotide sequence ID" value="XM_001268008.1"/>
</dbReference>
<dbReference type="SMR" id="A1CTE6"/>
<dbReference type="STRING" id="344612.A1CTE6"/>
<dbReference type="EnsemblFungi" id="EAW06583">
    <property type="protein sequence ID" value="EAW06583"/>
    <property type="gene ID" value="ACLA_082740"/>
</dbReference>
<dbReference type="GeneID" id="4700512"/>
<dbReference type="KEGG" id="act:ACLA_082740"/>
<dbReference type="eggNOG" id="KOG2394">
    <property type="taxonomic scope" value="Eukaryota"/>
</dbReference>
<dbReference type="OrthoDB" id="3367at2759"/>
<dbReference type="Proteomes" id="UP000006701">
    <property type="component" value="Unassembled WGS sequence"/>
</dbReference>
<dbReference type="GO" id="GO:0032153">
    <property type="term" value="C:cell division site"/>
    <property type="evidence" value="ECO:0007669"/>
    <property type="project" value="TreeGrafter"/>
</dbReference>
<dbReference type="GO" id="GO:0051286">
    <property type="term" value="C:cell tip"/>
    <property type="evidence" value="ECO:0007669"/>
    <property type="project" value="TreeGrafter"/>
</dbReference>
<dbReference type="GO" id="GO:0005634">
    <property type="term" value="C:nucleus"/>
    <property type="evidence" value="ECO:0007669"/>
    <property type="project" value="TreeGrafter"/>
</dbReference>
<dbReference type="GO" id="GO:0045013">
    <property type="term" value="P:carbon catabolite repression of transcription"/>
    <property type="evidence" value="ECO:0000250"/>
    <property type="project" value="UniProtKB"/>
</dbReference>
<dbReference type="FunFam" id="2.130.10.10:FF:000531">
    <property type="entry name" value="Probable catabolite repression protein creC"/>
    <property type="match status" value="1"/>
</dbReference>
<dbReference type="Gene3D" id="2.130.10.10">
    <property type="entry name" value="YVTN repeat-like/Quinoprotein amine dehydrogenase"/>
    <property type="match status" value="1"/>
</dbReference>
<dbReference type="InterPro" id="IPR015943">
    <property type="entry name" value="WD40/YVTN_repeat-like_dom_sf"/>
</dbReference>
<dbReference type="InterPro" id="IPR036322">
    <property type="entry name" value="WD40_repeat_dom_sf"/>
</dbReference>
<dbReference type="InterPro" id="IPR001680">
    <property type="entry name" value="WD40_rpt"/>
</dbReference>
<dbReference type="InterPro" id="IPR051362">
    <property type="entry name" value="WD_repeat_creC_regulators"/>
</dbReference>
<dbReference type="PANTHER" id="PTHR14107:SF16">
    <property type="entry name" value="AT02583P"/>
    <property type="match status" value="1"/>
</dbReference>
<dbReference type="PANTHER" id="PTHR14107">
    <property type="entry name" value="WD REPEAT PROTEIN"/>
    <property type="match status" value="1"/>
</dbReference>
<dbReference type="Pfam" id="PF00400">
    <property type="entry name" value="WD40"/>
    <property type="match status" value="1"/>
</dbReference>
<dbReference type="SMART" id="SM00320">
    <property type="entry name" value="WD40"/>
    <property type="match status" value="5"/>
</dbReference>
<dbReference type="SUPFAM" id="SSF50978">
    <property type="entry name" value="WD40 repeat-like"/>
    <property type="match status" value="1"/>
</dbReference>
<dbReference type="PROSITE" id="PS50082">
    <property type="entry name" value="WD_REPEATS_2"/>
    <property type="match status" value="1"/>
</dbReference>
<dbReference type="PROSITE" id="PS50294">
    <property type="entry name" value="WD_REPEATS_REGION"/>
    <property type="match status" value="1"/>
</dbReference>
<gene>
    <name type="primary">creC</name>
    <name type="ORF">ACLA_082740</name>
</gene>
<sequence length="573" mass="63217">MAVPVIETNNIISHPEGGCPLQVGEGTYHLKDNLHLATPPPHPSEAPIVNPNPLATVPTPPTMGVKLSLICISPRTKTPSSLPNQTVVAPPFGDGNPALAPVPVKDGLKRRKPKNNIIKSSSSFVSRVITHEAATKRLNDRSPEGLFAFANINRAFQWLDLSSKQKEEPLTKILFTKAHMLCHDTNELTKSSSHIDIVMGSSAGDIIWYEPMSQKYARINKNGVVSNSPVTHIKWIPGSENLFMAAHANGQLAVYDKEKEDALFTPEIQNQSAEALKASGRQPLQVLKSVNSRNQKTNPVALWKLANQRISHFAFSPDQRHLAVVLEDGSLRVMDYLKEEVLDIFRSYYGGLICVCWSPDGKYIVTGGQDDLLTIWSLPERKIVARCQGHNSWVSAVAFDPWRCDERTYRFGSVGDDCRLLLWDFSVGMLHRPKVYQASARQRTSMITSNTQYGNRHRADSASNRMRSDSQKTANTYESCDQAVRHPVEPRARTALLPPIMSKVVGSDPICWLGFQEDCIMTSSLEGHIRTWDRPREGISDKYNDQSSSPAISASATGSGSVSGLADSNTGLS</sequence>